<reference key="1">
    <citation type="journal article" date="2006" name="Nat. Biotechnol.">
        <title>Genome sequence of the bioplastic-producing 'Knallgas' bacterium Ralstonia eutropha H16.</title>
        <authorList>
            <person name="Pohlmann A."/>
            <person name="Fricke W.F."/>
            <person name="Reinecke F."/>
            <person name="Kusian B."/>
            <person name="Liesegang H."/>
            <person name="Cramm R."/>
            <person name="Eitinger T."/>
            <person name="Ewering C."/>
            <person name="Poetter M."/>
            <person name="Schwartz E."/>
            <person name="Strittmatter A."/>
            <person name="Voss I."/>
            <person name="Gottschalk G."/>
            <person name="Steinbuechel A."/>
            <person name="Friedrich B."/>
            <person name="Bowien B."/>
        </authorList>
    </citation>
    <scope>NUCLEOTIDE SEQUENCE [LARGE SCALE GENOMIC DNA]</scope>
    <source>
        <strain>ATCC 17699 / DSM 428 / KCTC 22496 / NCIMB 10442 / H16 / Stanier 337</strain>
    </source>
</reference>
<proteinExistence type="inferred from homology"/>
<comment type="catalytic activity">
    <reaction evidence="1">
        <text>CMP + ATP = CDP + ADP</text>
        <dbReference type="Rhea" id="RHEA:11600"/>
        <dbReference type="ChEBI" id="CHEBI:30616"/>
        <dbReference type="ChEBI" id="CHEBI:58069"/>
        <dbReference type="ChEBI" id="CHEBI:60377"/>
        <dbReference type="ChEBI" id="CHEBI:456216"/>
        <dbReference type="EC" id="2.7.4.25"/>
    </reaction>
</comment>
<comment type="catalytic activity">
    <reaction evidence="1">
        <text>dCMP + ATP = dCDP + ADP</text>
        <dbReference type="Rhea" id="RHEA:25094"/>
        <dbReference type="ChEBI" id="CHEBI:30616"/>
        <dbReference type="ChEBI" id="CHEBI:57566"/>
        <dbReference type="ChEBI" id="CHEBI:58593"/>
        <dbReference type="ChEBI" id="CHEBI:456216"/>
        <dbReference type="EC" id="2.7.4.25"/>
    </reaction>
</comment>
<comment type="subcellular location">
    <subcellularLocation>
        <location evidence="1">Cytoplasm</location>
    </subcellularLocation>
</comment>
<comment type="similarity">
    <text evidence="1">Belongs to the cytidylate kinase family. Type 1 subfamily.</text>
</comment>
<protein>
    <recommendedName>
        <fullName evidence="1">Cytidylate kinase</fullName>
        <shortName evidence="1">CK</shortName>
        <ecNumber evidence="1">2.7.4.25</ecNumber>
    </recommendedName>
    <alternativeName>
        <fullName evidence="1">Cytidine monophosphate kinase</fullName>
        <shortName evidence="1">CMP kinase</shortName>
    </alternativeName>
</protein>
<accession>Q0KDH7</accession>
<feature type="chain" id="PRO_1000048256" description="Cytidylate kinase">
    <location>
        <begin position="1"/>
        <end position="222"/>
    </location>
</feature>
<feature type="binding site" evidence="1">
    <location>
        <begin position="11"/>
        <end position="19"/>
    </location>
    <ligand>
        <name>ATP</name>
        <dbReference type="ChEBI" id="CHEBI:30616"/>
    </ligand>
</feature>
<evidence type="ECO:0000255" key="1">
    <source>
        <dbReference type="HAMAP-Rule" id="MF_00238"/>
    </source>
</evidence>
<dbReference type="EC" id="2.7.4.25" evidence="1"/>
<dbReference type="EMBL" id="AM260479">
    <property type="protein sequence ID" value="CAJ91944.1"/>
    <property type="molecule type" value="Genomic_DNA"/>
</dbReference>
<dbReference type="RefSeq" id="WP_010812955.1">
    <property type="nucleotide sequence ID" value="NZ_CP039287.1"/>
</dbReference>
<dbReference type="SMR" id="Q0KDH7"/>
<dbReference type="STRING" id="381666.H16_A0797"/>
<dbReference type="KEGG" id="reh:H16_A0797"/>
<dbReference type="eggNOG" id="COG0283">
    <property type="taxonomic scope" value="Bacteria"/>
</dbReference>
<dbReference type="HOGENOM" id="CLU_079959_2_0_4"/>
<dbReference type="OrthoDB" id="9807434at2"/>
<dbReference type="Proteomes" id="UP000008210">
    <property type="component" value="Chromosome 1"/>
</dbReference>
<dbReference type="GO" id="GO:0005829">
    <property type="term" value="C:cytosol"/>
    <property type="evidence" value="ECO:0007669"/>
    <property type="project" value="TreeGrafter"/>
</dbReference>
<dbReference type="GO" id="GO:0005524">
    <property type="term" value="F:ATP binding"/>
    <property type="evidence" value="ECO:0007669"/>
    <property type="project" value="UniProtKB-UniRule"/>
</dbReference>
<dbReference type="GO" id="GO:0036430">
    <property type="term" value="F:CMP kinase activity"/>
    <property type="evidence" value="ECO:0007669"/>
    <property type="project" value="RHEA"/>
</dbReference>
<dbReference type="GO" id="GO:0036431">
    <property type="term" value="F:dCMP kinase activity"/>
    <property type="evidence" value="ECO:0007669"/>
    <property type="project" value="RHEA"/>
</dbReference>
<dbReference type="GO" id="GO:0015949">
    <property type="term" value="P:nucleobase-containing small molecule interconversion"/>
    <property type="evidence" value="ECO:0007669"/>
    <property type="project" value="TreeGrafter"/>
</dbReference>
<dbReference type="GO" id="GO:0006220">
    <property type="term" value="P:pyrimidine nucleotide metabolic process"/>
    <property type="evidence" value="ECO:0007669"/>
    <property type="project" value="UniProtKB-UniRule"/>
</dbReference>
<dbReference type="CDD" id="cd02020">
    <property type="entry name" value="CMPK"/>
    <property type="match status" value="1"/>
</dbReference>
<dbReference type="Gene3D" id="3.40.50.300">
    <property type="entry name" value="P-loop containing nucleotide triphosphate hydrolases"/>
    <property type="match status" value="1"/>
</dbReference>
<dbReference type="HAMAP" id="MF_00238">
    <property type="entry name" value="Cytidyl_kinase_type1"/>
    <property type="match status" value="1"/>
</dbReference>
<dbReference type="InterPro" id="IPR003136">
    <property type="entry name" value="Cytidylate_kin"/>
</dbReference>
<dbReference type="InterPro" id="IPR011994">
    <property type="entry name" value="Cytidylate_kinase_dom"/>
</dbReference>
<dbReference type="InterPro" id="IPR027417">
    <property type="entry name" value="P-loop_NTPase"/>
</dbReference>
<dbReference type="NCBIfam" id="TIGR00017">
    <property type="entry name" value="cmk"/>
    <property type="match status" value="1"/>
</dbReference>
<dbReference type="PANTHER" id="PTHR21299:SF2">
    <property type="entry name" value="CYTIDYLATE KINASE"/>
    <property type="match status" value="1"/>
</dbReference>
<dbReference type="PANTHER" id="PTHR21299">
    <property type="entry name" value="CYTIDYLATE KINASE/PANTOATE-BETA-ALANINE LIGASE"/>
    <property type="match status" value="1"/>
</dbReference>
<dbReference type="Pfam" id="PF02224">
    <property type="entry name" value="Cytidylate_kin"/>
    <property type="match status" value="1"/>
</dbReference>
<dbReference type="SUPFAM" id="SSF52540">
    <property type="entry name" value="P-loop containing nucleoside triphosphate hydrolases"/>
    <property type="match status" value="1"/>
</dbReference>
<name>KCY_CUPNH</name>
<organism>
    <name type="scientific">Cupriavidus necator (strain ATCC 17699 / DSM 428 / KCTC 22496 / NCIMB 10442 / H16 / Stanier 337)</name>
    <name type="common">Ralstonia eutropha</name>
    <dbReference type="NCBI Taxonomy" id="381666"/>
    <lineage>
        <taxon>Bacteria</taxon>
        <taxon>Pseudomonadati</taxon>
        <taxon>Pseudomonadota</taxon>
        <taxon>Betaproteobacteria</taxon>
        <taxon>Burkholderiales</taxon>
        <taxon>Burkholderiaceae</taxon>
        <taxon>Cupriavidus</taxon>
    </lineage>
</organism>
<sequence length="222" mass="23969">MTIVNVIAIDGPTASGKGTVAHKVADAVGFHLLDSGALYRLVALASDRAGIDLADVDALAKIASRLDVKFGPDRVWLQGEEVSLAIRAEAIGNRASAIAVHQPVRDALTQLQRSFRKLPGLVADGRDMGTVIFPDAPLKVFLTASVEARARRRYKQLIDKGISANIEDLLRDLEARDVRDRTRTAAPLRPAEDAKLLDTSDMTVDQAVAQVLEWFAAVRPDA</sequence>
<gene>
    <name evidence="1" type="primary">cmk</name>
    <name type="ordered locus">H16_A0797</name>
</gene>
<keyword id="KW-0067">ATP-binding</keyword>
<keyword id="KW-0963">Cytoplasm</keyword>
<keyword id="KW-0418">Kinase</keyword>
<keyword id="KW-0547">Nucleotide-binding</keyword>
<keyword id="KW-1185">Reference proteome</keyword>
<keyword id="KW-0808">Transferase</keyword>